<proteinExistence type="inferred from homology"/>
<accession>Q8U1H3</accession>
<dbReference type="EMBL" id="AE009950">
    <property type="protein sequence ID" value="AAL81359.1"/>
    <property type="molecule type" value="Genomic_DNA"/>
</dbReference>
<dbReference type="RefSeq" id="WP_011012378.1">
    <property type="nucleotide sequence ID" value="NZ_CP023154.1"/>
</dbReference>
<dbReference type="SMR" id="Q8U1H3"/>
<dbReference type="STRING" id="186497.PF1235"/>
<dbReference type="PaxDb" id="186497-PF1235"/>
<dbReference type="GeneID" id="41713040"/>
<dbReference type="KEGG" id="pfu:PF1235"/>
<dbReference type="PATRIC" id="fig|186497.12.peg.1297"/>
<dbReference type="eggNOG" id="arCOG04701">
    <property type="taxonomic scope" value="Archaea"/>
</dbReference>
<dbReference type="HOGENOM" id="CLU_114342_2_3_2"/>
<dbReference type="OrthoDB" id="253428at2157"/>
<dbReference type="PhylomeDB" id="Q8U1H3"/>
<dbReference type="Proteomes" id="UP000001013">
    <property type="component" value="Chromosome"/>
</dbReference>
<dbReference type="GO" id="GO:0005886">
    <property type="term" value="C:plasma membrane"/>
    <property type="evidence" value="ECO:0007669"/>
    <property type="project" value="UniProtKB-SubCell"/>
</dbReference>
<dbReference type="GO" id="GO:0062054">
    <property type="term" value="F:fluoride channel activity"/>
    <property type="evidence" value="ECO:0007669"/>
    <property type="project" value="UniProtKB-UniRule"/>
</dbReference>
<dbReference type="GO" id="GO:0046872">
    <property type="term" value="F:metal ion binding"/>
    <property type="evidence" value="ECO:0007669"/>
    <property type="project" value="UniProtKB-KW"/>
</dbReference>
<dbReference type="GO" id="GO:0140114">
    <property type="term" value="P:cellular detoxification of fluoride"/>
    <property type="evidence" value="ECO:0007669"/>
    <property type="project" value="UniProtKB-UniRule"/>
</dbReference>
<dbReference type="HAMAP" id="MF_00454">
    <property type="entry name" value="FluC"/>
    <property type="match status" value="1"/>
</dbReference>
<dbReference type="InterPro" id="IPR003691">
    <property type="entry name" value="FluC"/>
</dbReference>
<dbReference type="NCBIfam" id="TIGR00494">
    <property type="entry name" value="crcB"/>
    <property type="match status" value="1"/>
</dbReference>
<dbReference type="PANTHER" id="PTHR28259">
    <property type="entry name" value="FLUORIDE EXPORT PROTEIN 1-RELATED"/>
    <property type="match status" value="1"/>
</dbReference>
<dbReference type="PANTHER" id="PTHR28259:SF1">
    <property type="entry name" value="FLUORIDE EXPORT PROTEIN 1-RELATED"/>
    <property type="match status" value="1"/>
</dbReference>
<dbReference type="Pfam" id="PF02537">
    <property type="entry name" value="CRCB"/>
    <property type="match status" value="1"/>
</dbReference>
<feature type="chain" id="PRO_0000110234" description="Fluoride-specific ion channel FluC">
    <location>
        <begin position="1"/>
        <end position="123"/>
    </location>
</feature>
<feature type="transmembrane region" description="Helical" evidence="1">
    <location>
        <begin position="6"/>
        <end position="26"/>
    </location>
</feature>
<feature type="transmembrane region" description="Helical" evidence="1">
    <location>
        <begin position="38"/>
        <end position="58"/>
    </location>
</feature>
<feature type="transmembrane region" description="Helical" evidence="1">
    <location>
        <begin position="68"/>
        <end position="88"/>
    </location>
</feature>
<feature type="transmembrane region" description="Helical" evidence="1">
    <location>
        <begin position="100"/>
        <end position="120"/>
    </location>
</feature>
<feature type="binding site" evidence="1">
    <location>
        <position position="75"/>
    </location>
    <ligand>
        <name>Na(+)</name>
        <dbReference type="ChEBI" id="CHEBI:29101"/>
        <note>structural</note>
    </ligand>
</feature>
<feature type="binding site" evidence="1">
    <location>
        <position position="78"/>
    </location>
    <ligand>
        <name>Na(+)</name>
        <dbReference type="ChEBI" id="CHEBI:29101"/>
        <note>structural</note>
    </ligand>
</feature>
<gene>
    <name evidence="1" type="primary">fluC</name>
    <name evidence="1" type="synonym">crcB</name>
    <name type="ordered locus">PF1235</name>
</gene>
<sequence length="123" mass="13485">MDLREVALVLIGGGTGAVARYYLSGVLPVYRSFPVGTLLVNSLASFLLGYLYGLIFWGLDVSRESRLFLGTGFCGGLSTFSTFSYETFSLIREGEYLTALLNIFANVLATIFLVFLGFVLARR</sequence>
<reference key="1">
    <citation type="journal article" date="1999" name="Genetics">
        <title>Divergence of the hyperthermophilic archaea Pyrococcus furiosus and P. horikoshii inferred from complete genomic sequences.</title>
        <authorList>
            <person name="Maeder D.L."/>
            <person name="Weiss R.B."/>
            <person name="Dunn D.M."/>
            <person name="Cherry J.L."/>
            <person name="Gonzalez J.M."/>
            <person name="DiRuggiero J."/>
            <person name="Robb F.T."/>
        </authorList>
    </citation>
    <scope>NUCLEOTIDE SEQUENCE [LARGE SCALE GENOMIC DNA]</scope>
    <source>
        <strain>ATCC 43587 / DSM 3638 / JCM 8422 / Vc1</strain>
    </source>
</reference>
<comment type="function">
    <text evidence="1">Fluoride-specific ion channel. Important for reducing fluoride concentration in the cell, thus reducing its toxicity.</text>
</comment>
<comment type="catalytic activity">
    <reaction evidence="1">
        <text>fluoride(in) = fluoride(out)</text>
        <dbReference type="Rhea" id="RHEA:76159"/>
        <dbReference type="ChEBI" id="CHEBI:17051"/>
    </reaction>
    <physiologicalReaction direction="left-to-right" evidence="1">
        <dbReference type="Rhea" id="RHEA:76160"/>
    </physiologicalReaction>
</comment>
<comment type="activity regulation">
    <text evidence="1">Na(+) is not transported, but it plays an essential structural role and its presence is essential for fluoride channel function.</text>
</comment>
<comment type="subcellular location">
    <subcellularLocation>
        <location evidence="1">Cell membrane</location>
        <topology evidence="1">Multi-pass membrane protein</topology>
    </subcellularLocation>
</comment>
<comment type="similarity">
    <text evidence="1">Belongs to the fluoride channel Fluc/FEX (TC 1.A.43) family.</text>
</comment>
<evidence type="ECO:0000255" key="1">
    <source>
        <dbReference type="HAMAP-Rule" id="MF_00454"/>
    </source>
</evidence>
<name>FLUC_PYRFU</name>
<protein>
    <recommendedName>
        <fullName evidence="1">Fluoride-specific ion channel FluC</fullName>
    </recommendedName>
</protein>
<keyword id="KW-1003">Cell membrane</keyword>
<keyword id="KW-0407">Ion channel</keyword>
<keyword id="KW-0406">Ion transport</keyword>
<keyword id="KW-0472">Membrane</keyword>
<keyword id="KW-0479">Metal-binding</keyword>
<keyword id="KW-1185">Reference proteome</keyword>
<keyword id="KW-0915">Sodium</keyword>
<keyword id="KW-0812">Transmembrane</keyword>
<keyword id="KW-1133">Transmembrane helix</keyword>
<keyword id="KW-0813">Transport</keyword>
<organism>
    <name type="scientific">Pyrococcus furiosus (strain ATCC 43587 / DSM 3638 / JCM 8422 / Vc1)</name>
    <dbReference type="NCBI Taxonomy" id="186497"/>
    <lineage>
        <taxon>Archaea</taxon>
        <taxon>Methanobacteriati</taxon>
        <taxon>Methanobacteriota</taxon>
        <taxon>Thermococci</taxon>
        <taxon>Thermococcales</taxon>
        <taxon>Thermococcaceae</taxon>
        <taxon>Pyrococcus</taxon>
    </lineage>
</organism>